<organism>
    <name type="scientific">Shewanella baltica (strain OS185)</name>
    <dbReference type="NCBI Taxonomy" id="402882"/>
    <lineage>
        <taxon>Bacteria</taxon>
        <taxon>Pseudomonadati</taxon>
        <taxon>Pseudomonadota</taxon>
        <taxon>Gammaproteobacteria</taxon>
        <taxon>Alteromonadales</taxon>
        <taxon>Shewanellaceae</taxon>
        <taxon>Shewanella</taxon>
    </lineage>
</organism>
<gene>
    <name evidence="1" type="primary">ruvC</name>
    <name type="ordered locus">Shew185_2305</name>
</gene>
<comment type="function">
    <text evidence="1">The RuvA-RuvB-RuvC complex processes Holliday junction (HJ) DNA during genetic recombination and DNA repair. Endonuclease that resolves HJ intermediates. Cleaves cruciform DNA by making single-stranded nicks across the HJ at symmetrical positions within the homologous arms, yielding a 5'-phosphate and a 3'-hydroxyl group; requires a central core of homology in the junction. The consensus cleavage sequence is 5'-(A/T)TT(C/G)-3'. Cleavage occurs on the 3'-side of the TT dinucleotide at the point of strand exchange. HJ branch migration catalyzed by RuvA-RuvB allows RuvC to scan DNA until it finds its consensus sequence, where it cleaves and resolves the cruciform DNA.</text>
</comment>
<comment type="catalytic activity">
    <reaction evidence="1">
        <text>Endonucleolytic cleavage at a junction such as a reciprocal single-stranded crossover between two homologous DNA duplexes (Holliday junction).</text>
        <dbReference type="EC" id="3.1.21.10"/>
    </reaction>
</comment>
<comment type="cofactor">
    <cofactor evidence="1">
        <name>Mg(2+)</name>
        <dbReference type="ChEBI" id="CHEBI:18420"/>
    </cofactor>
    <text evidence="1">Binds 2 Mg(2+) ion per subunit.</text>
</comment>
<comment type="subunit">
    <text evidence="1">Homodimer which binds Holliday junction (HJ) DNA. The HJ becomes 2-fold symmetrical on binding to RuvC with unstacked arms; it has a different conformation from HJ DNA in complex with RuvA. In the full resolvosome a probable DNA-RuvA(4)-RuvB(12)-RuvC(2) complex forms which resolves the HJ.</text>
</comment>
<comment type="subcellular location">
    <subcellularLocation>
        <location evidence="1">Cytoplasm</location>
    </subcellularLocation>
</comment>
<comment type="similarity">
    <text evidence="1">Belongs to the RuvC family.</text>
</comment>
<protein>
    <recommendedName>
        <fullName evidence="1">Crossover junction endodeoxyribonuclease RuvC</fullName>
        <ecNumber evidence="1">3.1.21.10</ecNumber>
    </recommendedName>
    <alternativeName>
        <fullName evidence="1">Holliday junction nuclease RuvC</fullName>
    </alternativeName>
    <alternativeName>
        <fullName evidence="1">Holliday junction resolvase RuvC</fullName>
    </alternativeName>
</protein>
<keyword id="KW-0963">Cytoplasm</keyword>
<keyword id="KW-0227">DNA damage</keyword>
<keyword id="KW-0233">DNA recombination</keyword>
<keyword id="KW-0234">DNA repair</keyword>
<keyword id="KW-0238">DNA-binding</keyword>
<keyword id="KW-0255">Endonuclease</keyword>
<keyword id="KW-0378">Hydrolase</keyword>
<keyword id="KW-0460">Magnesium</keyword>
<keyword id="KW-0479">Metal-binding</keyword>
<keyword id="KW-0540">Nuclease</keyword>
<evidence type="ECO:0000255" key="1">
    <source>
        <dbReference type="HAMAP-Rule" id="MF_00034"/>
    </source>
</evidence>
<proteinExistence type="inferred from homology"/>
<feature type="chain" id="PRO_1000002827" description="Crossover junction endodeoxyribonuclease RuvC">
    <location>
        <begin position="1"/>
        <end position="173"/>
    </location>
</feature>
<feature type="active site" evidence="1">
    <location>
        <position position="8"/>
    </location>
</feature>
<feature type="active site" evidence="1">
    <location>
        <position position="67"/>
    </location>
</feature>
<feature type="active site" evidence="1">
    <location>
        <position position="139"/>
    </location>
</feature>
<feature type="binding site" evidence="1">
    <location>
        <position position="8"/>
    </location>
    <ligand>
        <name>Mg(2+)</name>
        <dbReference type="ChEBI" id="CHEBI:18420"/>
        <label>1</label>
    </ligand>
</feature>
<feature type="binding site" evidence="1">
    <location>
        <position position="67"/>
    </location>
    <ligand>
        <name>Mg(2+)</name>
        <dbReference type="ChEBI" id="CHEBI:18420"/>
        <label>2</label>
    </ligand>
</feature>
<feature type="binding site" evidence="1">
    <location>
        <position position="139"/>
    </location>
    <ligand>
        <name>Mg(2+)</name>
        <dbReference type="ChEBI" id="CHEBI:18420"/>
        <label>1</label>
    </ligand>
</feature>
<dbReference type="EC" id="3.1.21.10" evidence="1"/>
<dbReference type="EMBL" id="CP000753">
    <property type="protein sequence ID" value="ABS08443.1"/>
    <property type="molecule type" value="Genomic_DNA"/>
</dbReference>
<dbReference type="RefSeq" id="WP_006081743.1">
    <property type="nucleotide sequence ID" value="NC_009665.1"/>
</dbReference>
<dbReference type="SMR" id="A6WNQ4"/>
<dbReference type="GeneID" id="11772538"/>
<dbReference type="KEGG" id="sbm:Shew185_2305"/>
<dbReference type="HOGENOM" id="CLU_091257_2_1_6"/>
<dbReference type="GO" id="GO:0005737">
    <property type="term" value="C:cytoplasm"/>
    <property type="evidence" value="ECO:0007669"/>
    <property type="project" value="UniProtKB-SubCell"/>
</dbReference>
<dbReference type="GO" id="GO:0048476">
    <property type="term" value="C:Holliday junction resolvase complex"/>
    <property type="evidence" value="ECO:0007669"/>
    <property type="project" value="UniProtKB-UniRule"/>
</dbReference>
<dbReference type="GO" id="GO:0008821">
    <property type="term" value="F:crossover junction DNA endonuclease activity"/>
    <property type="evidence" value="ECO:0007669"/>
    <property type="project" value="UniProtKB-UniRule"/>
</dbReference>
<dbReference type="GO" id="GO:0003677">
    <property type="term" value="F:DNA binding"/>
    <property type="evidence" value="ECO:0007669"/>
    <property type="project" value="UniProtKB-KW"/>
</dbReference>
<dbReference type="GO" id="GO:0000287">
    <property type="term" value="F:magnesium ion binding"/>
    <property type="evidence" value="ECO:0007669"/>
    <property type="project" value="UniProtKB-UniRule"/>
</dbReference>
<dbReference type="GO" id="GO:0006310">
    <property type="term" value="P:DNA recombination"/>
    <property type="evidence" value="ECO:0007669"/>
    <property type="project" value="UniProtKB-UniRule"/>
</dbReference>
<dbReference type="GO" id="GO:0006281">
    <property type="term" value="P:DNA repair"/>
    <property type="evidence" value="ECO:0007669"/>
    <property type="project" value="UniProtKB-UniRule"/>
</dbReference>
<dbReference type="CDD" id="cd16962">
    <property type="entry name" value="RuvC"/>
    <property type="match status" value="1"/>
</dbReference>
<dbReference type="FunFam" id="3.30.420.10:FF:000002">
    <property type="entry name" value="Crossover junction endodeoxyribonuclease RuvC"/>
    <property type="match status" value="1"/>
</dbReference>
<dbReference type="Gene3D" id="3.30.420.10">
    <property type="entry name" value="Ribonuclease H-like superfamily/Ribonuclease H"/>
    <property type="match status" value="1"/>
</dbReference>
<dbReference type="HAMAP" id="MF_00034">
    <property type="entry name" value="RuvC"/>
    <property type="match status" value="1"/>
</dbReference>
<dbReference type="InterPro" id="IPR012337">
    <property type="entry name" value="RNaseH-like_sf"/>
</dbReference>
<dbReference type="InterPro" id="IPR036397">
    <property type="entry name" value="RNaseH_sf"/>
</dbReference>
<dbReference type="InterPro" id="IPR020563">
    <property type="entry name" value="X-over_junc_endoDNase_Mg_BS"/>
</dbReference>
<dbReference type="InterPro" id="IPR002176">
    <property type="entry name" value="X-over_junc_endoDNase_RuvC"/>
</dbReference>
<dbReference type="NCBIfam" id="NF000711">
    <property type="entry name" value="PRK00039.2-1"/>
    <property type="match status" value="1"/>
</dbReference>
<dbReference type="NCBIfam" id="TIGR00228">
    <property type="entry name" value="ruvC"/>
    <property type="match status" value="1"/>
</dbReference>
<dbReference type="PANTHER" id="PTHR30194">
    <property type="entry name" value="CROSSOVER JUNCTION ENDODEOXYRIBONUCLEASE RUVC"/>
    <property type="match status" value="1"/>
</dbReference>
<dbReference type="PANTHER" id="PTHR30194:SF3">
    <property type="entry name" value="CROSSOVER JUNCTION ENDODEOXYRIBONUCLEASE RUVC"/>
    <property type="match status" value="1"/>
</dbReference>
<dbReference type="Pfam" id="PF02075">
    <property type="entry name" value="RuvC"/>
    <property type="match status" value="1"/>
</dbReference>
<dbReference type="PRINTS" id="PR00696">
    <property type="entry name" value="RSOLVASERUVC"/>
</dbReference>
<dbReference type="SUPFAM" id="SSF53098">
    <property type="entry name" value="Ribonuclease H-like"/>
    <property type="match status" value="1"/>
</dbReference>
<dbReference type="PROSITE" id="PS01321">
    <property type="entry name" value="RUVC"/>
    <property type="match status" value="1"/>
</dbReference>
<accession>A6WNQ4</accession>
<sequence>MAIILGVDPGSRITGYGVIQCQGRHQIYLGSGCIRTSSEELPGRLKQIFDGITEIIRQYQPDEFAIERVFMAKNADSALKLGQARGAAIVAATVANLPVAEYSATQIKSAVVGTGRAQKAQVQHMIQQLLKLPAAPQADAADALGVAVCHYHTSQSLIALSGRATARTYGRYR</sequence>
<name>RUVC_SHEB8</name>
<reference key="1">
    <citation type="submission" date="2007-07" db="EMBL/GenBank/DDBJ databases">
        <title>Complete sequence of chromosome of Shewanella baltica OS185.</title>
        <authorList>
            <consortium name="US DOE Joint Genome Institute"/>
            <person name="Copeland A."/>
            <person name="Lucas S."/>
            <person name="Lapidus A."/>
            <person name="Barry K."/>
            <person name="Glavina del Rio T."/>
            <person name="Dalin E."/>
            <person name="Tice H."/>
            <person name="Pitluck S."/>
            <person name="Sims D."/>
            <person name="Brettin T."/>
            <person name="Bruce D."/>
            <person name="Detter J.C."/>
            <person name="Han C."/>
            <person name="Schmutz J."/>
            <person name="Larimer F."/>
            <person name="Land M."/>
            <person name="Hauser L."/>
            <person name="Kyrpides N."/>
            <person name="Mikhailova N."/>
            <person name="Brettar I."/>
            <person name="Rodrigues J."/>
            <person name="Konstantinidis K."/>
            <person name="Tiedje J."/>
            <person name="Richardson P."/>
        </authorList>
    </citation>
    <scope>NUCLEOTIDE SEQUENCE [LARGE SCALE GENOMIC DNA]</scope>
    <source>
        <strain>OS185</strain>
    </source>
</reference>